<comment type="function">
    <text evidence="2">Cell wall formation.</text>
</comment>
<comment type="catalytic activity">
    <reaction evidence="2">
        <text>2 D-alanine + ATP = D-alanyl-D-alanine + ADP + phosphate + H(+)</text>
        <dbReference type="Rhea" id="RHEA:11224"/>
        <dbReference type="ChEBI" id="CHEBI:15378"/>
        <dbReference type="ChEBI" id="CHEBI:30616"/>
        <dbReference type="ChEBI" id="CHEBI:43474"/>
        <dbReference type="ChEBI" id="CHEBI:57416"/>
        <dbReference type="ChEBI" id="CHEBI:57822"/>
        <dbReference type="ChEBI" id="CHEBI:456216"/>
        <dbReference type="EC" id="6.3.2.4"/>
    </reaction>
</comment>
<comment type="cofactor">
    <cofactor evidence="1">
        <name>Mg(2+)</name>
        <dbReference type="ChEBI" id="CHEBI:18420"/>
    </cofactor>
    <cofactor evidence="1">
        <name>Mn(2+)</name>
        <dbReference type="ChEBI" id="CHEBI:29035"/>
    </cofactor>
    <text evidence="1">Binds 2 magnesium or manganese ions per subunit.</text>
</comment>
<comment type="pathway">
    <text evidence="2">Cell wall biogenesis; peptidoglycan biosynthesis.</text>
</comment>
<comment type="subcellular location">
    <subcellularLocation>
        <location evidence="2">Cytoplasm</location>
    </subcellularLocation>
</comment>
<comment type="similarity">
    <text evidence="2">Belongs to the D-alanine--D-alanine ligase family.</text>
</comment>
<dbReference type="EC" id="6.3.2.4" evidence="2"/>
<dbReference type="EMBL" id="CP000736">
    <property type="protein sequence ID" value="ABR52987.1"/>
    <property type="molecule type" value="Genomic_DNA"/>
</dbReference>
<dbReference type="SMR" id="A6U3G9"/>
<dbReference type="KEGG" id="sah:SaurJH1_2158"/>
<dbReference type="HOGENOM" id="CLU_039268_0_0_9"/>
<dbReference type="UniPathway" id="UPA00219"/>
<dbReference type="GO" id="GO:0005829">
    <property type="term" value="C:cytosol"/>
    <property type="evidence" value="ECO:0007669"/>
    <property type="project" value="TreeGrafter"/>
</dbReference>
<dbReference type="GO" id="GO:0005524">
    <property type="term" value="F:ATP binding"/>
    <property type="evidence" value="ECO:0007669"/>
    <property type="project" value="UniProtKB-KW"/>
</dbReference>
<dbReference type="GO" id="GO:0008716">
    <property type="term" value="F:D-alanine-D-alanine ligase activity"/>
    <property type="evidence" value="ECO:0007669"/>
    <property type="project" value="UniProtKB-UniRule"/>
</dbReference>
<dbReference type="GO" id="GO:0046872">
    <property type="term" value="F:metal ion binding"/>
    <property type="evidence" value="ECO:0007669"/>
    <property type="project" value="UniProtKB-KW"/>
</dbReference>
<dbReference type="GO" id="GO:0071555">
    <property type="term" value="P:cell wall organization"/>
    <property type="evidence" value="ECO:0007669"/>
    <property type="project" value="UniProtKB-KW"/>
</dbReference>
<dbReference type="GO" id="GO:0009252">
    <property type="term" value="P:peptidoglycan biosynthetic process"/>
    <property type="evidence" value="ECO:0007669"/>
    <property type="project" value="UniProtKB-UniRule"/>
</dbReference>
<dbReference type="GO" id="GO:0008360">
    <property type="term" value="P:regulation of cell shape"/>
    <property type="evidence" value="ECO:0007669"/>
    <property type="project" value="UniProtKB-KW"/>
</dbReference>
<dbReference type="FunFam" id="3.30.1490.20:FF:000007">
    <property type="entry name" value="D-alanine--D-alanine ligase"/>
    <property type="match status" value="1"/>
</dbReference>
<dbReference type="FunFam" id="3.30.470.20:FF:000008">
    <property type="entry name" value="D-alanine--D-alanine ligase"/>
    <property type="match status" value="1"/>
</dbReference>
<dbReference type="FunFam" id="3.40.50.20:FF:000020">
    <property type="entry name" value="D-alanine--D-alanine ligase"/>
    <property type="match status" value="1"/>
</dbReference>
<dbReference type="Gene3D" id="3.40.50.20">
    <property type="match status" value="1"/>
</dbReference>
<dbReference type="Gene3D" id="3.30.1490.20">
    <property type="entry name" value="ATP-grasp fold, A domain"/>
    <property type="match status" value="1"/>
</dbReference>
<dbReference type="Gene3D" id="3.30.470.20">
    <property type="entry name" value="ATP-grasp fold, B domain"/>
    <property type="match status" value="1"/>
</dbReference>
<dbReference type="HAMAP" id="MF_00047">
    <property type="entry name" value="Dala_Dala_lig"/>
    <property type="match status" value="1"/>
</dbReference>
<dbReference type="InterPro" id="IPR011761">
    <property type="entry name" value="ATP-grasp"/>
</dbReference>
<dbReference type="InterPro" id="IPR013815">
    <property type="entry name" value="ATP_grasp_subdomain_1"/>
</dbReference>
<dbReference type="InterPro" id="IPR000291">
    <property type="entry name" value="D-Ala_lig_Van_CS"/>
</dbReference>
<dbReference type="InterPro" id="IPR005905">
    <property type="entry name" value="D_ala_D_ala"/>
</dbReference>
<dbReference type="InterPro" id="IPR011095">
    <property type="entry name" value="Dala_Dala_lig_C"/>
</dbReference>
<dbReference type="InterPro" id="IPR011127">
    <property type="entry name" value="Dala_Dala_lig_N"/>
</dbReference>
<dbReference type="InterPro" id="IPR016185">
    <property type="entry name" value="PreATP-grasp_dom_sf"/>
</dbReference>
<dbReference type="NCBIfam" id="TIGR01205">
    <property type="entry name" value="D_ala_D_alaTIGR"/>
    <property type="match status" value="1"/>
</dbReference>
<dbReference type="NCBIfam" id="NF002526">
    <property type="entry name" value="PRK01966.1-2"/>
    <property type="match status" value="1"/>
</dbReference>
<dbReference type="NCBIfam" id="NF002528">
    <property type="entry name" value="PRK01966.1-4"/>
    <property type="match status" value="1"/>
</dbReference>
<dbReference type="PANTHER" id="PTHR23132">
    <property type="entry name" value="D-ALANINE--D-ALANINE LIGASE"/>
    <property type="match status" value="1"/>
</dbReference>
<dbReference type="PANTHER" id="PTHR23132:SF25">
    <property type="entry name" value="D-ALANINE--D-ALANINE LIGASE A"/>
    <property type="match status" value="1"/>
</dbReference>
<dbReference type="Pfam" id="PF07478">
    <property type="entry name" value="Dala_Dala_lig_C"/>
    <property type="match status" value="1"/>
</dbReference>
<dbReference type="Pfam" id="PF01820">
    <property type="entry name" value="Dala_Dala_lig_N"/>
    <property type="match status" value="1"/>
</dbReference>
<dbReference type="PIRSF" id="PIRSF039102">
    <property type="entry name" value="Ddl/VanB"/>
    <property type="match status" value="1"/>
</dbReference>
<dbReference type="SUPFAM" id="SSF56059">
    <property type="entry name" value="Glutathione synthetase ATP-binding domain-like"/>
    <property type="match status" value="1"/>
</dbReference>
<dbReference type="SUPFAM" id="SSF52440">
    <property type="entry name" value="PreATP-grasp domain"/>
    <property type="match status" value="1"/>
</dbReference>
<dbReference type="PROSITE" id="PS50975">
    <property type="entry name" value="ATP_GRASP"/>
    <property type="match status" value="1"/>
</dbReference>
<dbReference type="PROSITE" id="PS00843">
    <property type="entry name" value="DALA_DALA_LIGASE_1"/>
    <property type="match status" value="1"/>
</dbReference>
<dbReference type="PROSITE" id="PS00844">
    <property type="entry name" value="DALA_DALA_LIGASE_2"/>
    <property type="match status" value="1"/>
</dbReference>
<gene>
    <name evidence="2" type="primary">ddl</name>
    <name type="ordered locus">SaurJH1_2158</name>
</gene>
<sequence>MTKENICIVFGGKSAEHEVSILTAQNVLNAIDKDKYHVDIIYITNDGDWRKQNNITAEIKSTDELHLENGEALEISQLLKESSSGQPYDAVFPLLHGPNGEDGTIQGLFEVLDVPYVGNGVLSAASSMDKLVMKQLFEHRGLPQLPYISFLRSEYEKYEHNILKLVNDKLNYPVFVKPANLGSSVGISKCNNEAELKEGIKEAFQFDRKLVIEQGVNAREIEVAVLGNDYPEATWPGEVVKDVAFYDYKSKYKDGKVQLQIPADLDEDVQLTLRNMALEAFKATDCSGLVRADFFVTEDNQIYINETNAMPGFTAFSMYPKLWENMGLSYPELITKLIELAKERHQDKQKNKYKID</sequence>
<organism>
    <name type="scientific">Staphylococcus aureus (strain JH1)</name>
    <dbReference type="NCBI Taxonomy" id="359787"/>
    <lineage>
        <taxon>Bacteria</taxon>
        <taxon>Bacillati</taxon>
        <taxon>Bacillota</taxon>
        <taxon>Bacilli</taxon>
        <taxon>Bacillales</taxon>
        <taxon>Staphylococcaceae</taxon>
        <taxon>Staphylococcus</taxon>
    </lineage>
</organism>
<evidence type="ECO:0000250" key="1"/>
<evidence type="ECO:0000255" key="2">
    <source>
        <dbReference type="HAMAP-Rule" id="MF_00047"/>
    </source>
</evidence>
<proteinExistence type="inferred from homology"/>
<reference key="1">
    <citation type="submission" date="2007-06" db="EMBL/GenBank/DDBJ databases">
        <title>Complete sequence of chromosome of Staphylococcus aureus subsp. aureus JH1.</title>
        <authorList>
            <consortium name="US DOE Joint Genome Institute"/>
            <person name="Copeland A."/>
            <person name="Lucas S."/>
            <person name="Lapidus A."/>
            <person name="Barry K."/>
            <person name="Detter J.C."/>
            <person name="Glavina del Rio T."/>
            <person name="Hammon N."/>
            <person name="Israni S."/>
            <person name="Dalin E."/>
            <person name="Tice H."/>
            <person name="Pitluck S."/>
            <person name="Chain P."/>
            <person name="Malfatti S."/>
            <person name="Shin M."/>
            <person name="Vergez L."/>
            <person name="Schmutz J."/>
            <person name="Larimer F."/>
            <person name="Land M."/>
            <person name="Hauser L."/>
            <person name="Kyrpides N."/>
            <person name="Ivanova N."/>
            <person name="Tomasz A."/>
            <person name="Richardson P."/>
        </authorList>
    </citation>
    <scope>NUCLEOTIDE SEQUENCE [LARGE SCALE GENOMIC DNA]</scope>
    <source>
        <strain>JH1</strain>
    </source>
</reference>
<protein>
    <recommendedName>
        <fullName evidence="2">D-alanine--D-alanine ligase</fullName>
        <ecNumber evidence="2">6.3.2.4</ecNumber>
    </recommendedName>
    <alternativeName>
        <fullName evidence="2">D-Ala-D-Ala ligase</fullName>
    </alternativeName>
    <alternativeName>
        <fullName evidence="2">D-alanylalanine synthetase</fullName>
    </alternativeName>
</protein>
<accession>A6U3G9</accession>
<keyword id="KW-0067">ATP-binding</keyword>
<keyword id="KW-0133">Cell shape</keyword>
<keyword id="KW-0961">Cell wall biogenesis/degradation</keyword>
<keyword id="KW-0963">Cytoplasm</keyword>
<keyword id="KW-0436">Ligase</keyword>
<keyword id="KW-0460">Magnesium</keyword>
<keyword id="KW-0464">Manganese</keyword>
<keyword id="KW-0479">Metal-binding</keyword>
<keyword id="KW-0547">Nucleotide-binding</keyword>
<keyword id="KW-0573">Peptidoglycan synthesis</keyword>
<feature type="chain" id="PRO_1000074797" description="D-alanine--D-alanine ligase">
    <location>
        <begin position="1"/>
        <end position="356"/>
    </location>
</feature>
<feature type="domain" description="ATP-grasp" evidence="2">
    <location>
        <begin position="134"/>
        <end position="339"/>
    </location>
</feature>
<feature type="binding site" evidence="2">
    <location>
        <begin position="167"/>
        <end position="222"/>
    </location>
    <ligand>
        <name>ATP</name>
        <dbReference type="ChEBI" id="CHEBI:30616"/>
    </ligand>
</feature>
<feature type="binding site" evidence="2">
    <location>
        <position position="293"/>
    </location>
    <ligand>
        <name>Mg(2+)</name>
        <dbReference type="ChEBI" id="CHEBI:18420"/>
        <label>1</label>
    </ligand>
</feature>
<feature type="binding site" evidence="2">
    <location>
        <position position="306"/>
    </location>
    <ligand>
        <name>Mg(2+)</name>
        <dbReference type="ChEBI" id="CHEBI:18420"/>
        <label>1</label>
    </ligand>
</feature>
<feature type="binding site" evidence="2">
    <location>
        <position position="306"/>
    </location>
    <ligand>
        <name>Mg(2+)</name>
        <dbReference type="ChEBI" id="CHEBI:18420"/>
        <label>2</label>
    </ligand>
</feature>
<feature type="binding site" evidence="2">
    <location>
        <position position="308"/>
    </location>
    <ligand>
        <name>Mg(2+)</name>
        <dbReference type="ChEBI" id="CHEBI:18420"/>
        <label>2</label>
    </ligand>
</feature>
<name>DDL_STAA2</name>